<evidence type="ECO:0000255" key="1">
    <source>
        <dbReference type="HAMAP-Rule" id="MF_01621"/>
    </source>
</evidence>
<comment type="function">
    <text evidence="1">Involved in the aerobic and anaerobic degradation of long-chain fatty acids via beta-oxidation cycle. Catalyzes the formation of 3-oxoacyl-CoA from enoyl-CoA via L-3-hydroxyacyl-CoA. It can also use D-3-hydroxyacyl-CoA and cis-3-enoyl-CoA as substrate.</text>
</comment>
<comment type="catalytic activity">
    <reaction evidence="1">
        <text>a (3S)-3-hydroxyacyl-CoA + NAD(+) = a 3-oxoacyl-CoA + NADH + H(+)</text>
        <dbReference type="Rhea" id="RHEA:22432"/>
        <dbReference type="ChEBI" id="CHEBI:15378"/>
        <dbReference type="ChEBI" id="CHEBI:57318"/>
        <dbReference type="ChEBI" id="CHEBI:57540"/>
        <dbReference type="ChEBI" id="CHEBI:57945"/>
        <dbReference type="ChEBI" id="CHEBI:90726"/>
        <dbReference type="EC" id="1.1.1.35"/>
    </reaction>
</comment>
<comment type="catalytic activity">
    <reaction evidence="1">
        <text>a (3S)-3-hydroxyacyl-CoA = a (2E)-enoyl-CoA + H2O</text>
        <dbReference type="Rhea" id="RHEA:16105"/>
        <dbReference type="ChEBI" id="CHEBI:15377"/>
        <dbReference type="ChEBI" id="CHEBI:57318"/>
        <dbReference type="ChEBI" id="CHEBI:58856"/>
        <dbReference type="EC" id="4.2.1.17"/>
    </reaction>
</comment>
<comment type="catalytic activity">
    <reaction evidence="1">
        <text>a 4-saturated-(3S)-3-hydroxyacyl-CoA = a (3E)-enoyl-CoA + H2O</text>
        <dbReference type="Rhea" id="RHEA:20724"/>
        <dbReference type="ChEBI" id="CHEBI:15377"/>
        <dbReference type="ChEBI" id="CHEBI:58521"/>
        <dbReference type="ChEBI" id="CHEBI:137480"/>
        <dbReference type="EC" id="4.2.1.17"/>
    </reaction>
</comment>
<comment type="catalytic activity">
    <reaction evidence="1">
        <text>(3S)-3-hydroxybutanoyl-CoA = (3R)-3-hydroxybutanoyl-CoA</text>
        <dbReference type="Rhea" id="RHEA:21760"/>
        <dbReference type="ChEBI" id="CHEBI:57315"/>
        <dbReference type="ChEBI" id="CHEBI:57316"/>
        <dbReference type="EC" id="5.1.2.3"/>
    </reaction>
</comment>
<comment type="catalytic activity">
    <reaction evidence="1">
        <text>a (3Z)-enoyl-CoA = a 4-saturated (2E)-enoyl-CoA</text>
        <dbReference type="Rhea" id="RHEA:45900"/>
        <dbReference type="ChEBI" id="CHEBI:85097"/>
        <dbReference type="ChEBI" id="CHEBI:85489"/>
        <dbReference type="EC" id="5.3.3.8"/>
    </reaction>
</comment>
<comment type="catalytic activity">
    <reaction evidence="1">
        <text>a (3E)-enoyl-CoA = a 4-saturated (2E)-enoyl-CoA</text>
        <dbReference type="Rhea" id="RHEA:45228"/>
        <dbReference type="ChEBI" id="CHEBI:58521"/>
        <dbReference type="ChEBI" id="CHEBI:85097"/>
        <dbReference type="EC" id="5.3.3.8"/>
    </reaction>
</comment>
<comment type="pathway">
    <text evidence="1">Lipid metabolism; fatty acid beta-oxidation.</text>
</comment>
<comment type="subunit">
    <text evidence="1">Heterotetramer of two alpha chains (FadB) and two beta chains (FadA).</text>
</comment>
<comment type="similarity">
    <text evidence="1">In the N-terminal section; belongs to the enoyl-CoA hydratase/isomerase family.</text>
</comment>
<comment type="similarity">
    <text evidence="1">In the C-terminal section; belongs to the 3-hydroxyacyl-CoA dehydrogenase family.</text>
</comment>
<accession>B6EGU2</accession>
<dbReference type="EC" id="4.2.1.17" evidence="1"/>
<dbReference type="EC" id="5.1.2.3" evidence="1"/>
<dbReference type="EC" id="5.3.3.8" evidence="1"/>
<dbReference type="EC" id="1.1.1.35" evidence="1"/>
<dbReference type="EMBL" id="FM178379">
    <property type="protein sequence ID" value="CAQ80658.1"/>
    <property type="molecule type" value="Genomic_DNA"/>
</dbReference>
<dbReference type="RefSeq" id="WP_012551375.1">
    <property type="nucleotide sequence ID" value="NC_011312.1"/>
</dbReference>
<dbReference type="SMR" id="B6EGU2"/>
<dbReference type="KEGG" id="vsa:VSAL_I2974"/>
<dbReference type="eggNOG" id="COG1024">
    <property type="taxonomic scope" value="Bacteria"/>
</dbReference>
<dbReference type="eggNOG" id="COG1250">
    <property type="taxonomic scope" value="Bacteria"/>
</dbReference>
<dbReference type="HOGENOM" id="CLU_009834_16_3_6"/>
<dbReference type="UniPathway" id="UPA00659"/>
<dbReference type="Proteomes" id="UP000001730">
    <property type="component" value="Chromosome 1"/>
</dbReference>
<dbReference type="GO" id="GO:0036125">
    <property type="term" value="C:fatty acid beta-oxidation multienzyme complex"/>
    <property type="evidence" value="ECO:0007669"/>
    <property type="project" value="InterPro"/>
</dbReference>
<dbReference type="GO" id="GO:0008692">
    <property type="term" value="F:3-hydroxybutyryl-CoA epimerase activity"/>
    <property type="evidence" value="ECO:0007669"/>
    <property type="project" value="UniProtKB-UniRule"/>
</dbReference>
<dbReference type="GO" id="GO:0004165">
    <property type="term" value="F:delta(3)-delta(2)-enoyl-CoA isomerase activity"/>
    <property type="evidence" value="ECO:0007669"/>
    <property type="project" value="UniProtKB-UniRule"/>
</dbReference>
<dbReference type="GO" id="GO:0004300">
    <property type="term" value="F:enoyl-CoA hydratase activity"/>
    <property type="evidence" value="ECO:0007669"/>
    <property type="project" value="UniProtKB-UniRule"/>
</dbReference>
<dbReference type="GO" id="GO:0016509">
    <property type="term" value="F:long-chain-3-hydroxyacyl-CoA dehydrogenase activity"/>
    <property type="evidence" value="ECO:0007669"/>
    <property type="project" value="TreeGrafter"/>
</dbReference>
<dbReference type="GO" id="GO:0070403">
    <property type="term" value="F:NAD+ binding"/>
    <property type="evidence" value="ECO:0007669"/>
    <property type="project" value="InterPro"/>
</dbReference>
<dbReference type="GO" id="GO:0006635">
    <property type="term" value="P:fatty acid beta-oxidation"/>
    <property type="evidence" value="ECO:0007669"/>
    <property type="project" value="UniProtKB-UniRule"/>
</dbReference>
<dbReference type="CDD" id="cd06558">
    <property type="entry name" value="crotonase-like"/>
    <property type="match status" value="1"/>
</dbReference>
<dbReference type="FunFam" id="3.40.50.720:FF:000009">
    <property type="entry name" value="Fatty oxidation complex, alpha subunit"/>
    <property type="match status" value="1"/>
</dbReference>
<dbReference type="Gene3D" id="1.10.1040.50">
    <property type="match status" value="1"/>
</dbReference>
<dbReference type="Gene3D" id="3.90.226.10">
    <property type="entry name" value="2-enoyl-CoA Hydratase, Chain A, domain 1"/>
    <property type="match status" value="1"/>
</dbReference>
<dbReference type="Gene3D" id="3.40.50.720">
    <property type="entry name" value="NAD(P)-binding Rossmann-like Domain"/>
    <property type="match status" value="1"/>
</dbReference>
<dbReference type="HAMAP" id="MF_01621">
    <property type="entry name" value="FadB"/>
    <property type="match status" value="1"/>
</dbReference>
<dbReference type="InterPro" id="IPR006180">
    <property type="entry name" value="3-OHacyl-CoA_DH_CS"/>
</dbReference>
<dbReference type="InterPro" id="IPR006176">
    <property type="entry name" value="3-OHacyl-CoA_DH_NAD-bd"/>
</dbReference>
<dbReference type="InterPro" id="IPR006108">
    <property type="entry name" value="3HC_DH_C"/>
</dbReference>
<dbReference type="InterPro" id="IPR008927">
    <property type="entry name" value="6-PGluconate_DH-like_C_sf"/>
</dbReference>
<dbReference type="InterPro" id="IPR029045">
    <property type="entry name" value="ClpP/crotonase-like_dom_sf"/>
</dbReference>
<dbReference type="InterPro" id="IPR018376">
    <property type="entry name" value="Enoyl-CoA_hyd/isom_CS"/>
</dbReference>
<dbReference type="InterPro" id="IPR001753">
    <property type="entry name" value="Enoyl-CoA_hydra/iso"/>
</dbReference>
<dbReference type="InterPro" id="IPR050136">
    <property type="entry name" value="FA_oxidation_alpha_subunit"/>
</dbReference>
<dbReference type="InterPro" id="IPR012799">
    <property type="entry name" value="FadB"/>
</dbReference>
<dbReference type="InterPro" id="IPR036291">
    <property type="entry name" value="NAD(P)-bd_dom_sf"/>
</dbReference>
<dbReference type="NCBIfam" id="TIGR02437">
    <property type="entry name" value="FadB"/>
    <property type="match status" value="1"/>
</dbReference>
<dbReference type="NCBIfam" id="NF008727">
    <property type="entry name" value="PRK11730.1"/>
    <property type="match status" value="1"/>
</dbReference>
<dbReference type="PANTHER" id="PTHR43612">
    <property type="entry name" value="TRIFUNCTIONAL ENZYME SUBUNIT ALPHA"/>
    <property type="match status" value="1"/>
</dbReference>
<dbReference type="PANTHER" id="PTHR43612:SF3">
    <property type="entry name" value="TRIFUNCTIONAL ENZYME SUBUNIT ALPHA, MITOCHONDRIAL"/>
    <property type="match status" value="1"/>
</dbReference>
<dbReference type="Pfam" id="PF00725">
    <property type="entry name" value="3HCDH"/>
    <property type="match status" value="2"/>
</dbReference>
<dbReference type="Pfam" id="PF02737">
    <property type="entry name" value="3HCDH_N"/>
    <property type="match status" value="1"/>
</dbReference>
<dbReference type="Pfam" id="PF00378">
    <property type="entry name" value="ECH_1"/>
    <property type="match status" value="1"/>
</dbReference>
<dbReference type="SUPFAM" id="SSF48179">
    <property type="entry name" value="6-phosphogluconate dehydrogenase C-terminal domain-like"/>
    <property type="match status" value="2"/>
</dbReference>
<dbReference type="SUPFAM" id="SSF52096">
    <property type="entry name" value="ClpP/crotonase"/>
    <property type="match status" value="1"/>
</dbReference>
<dbReference type="SUPFAM" id="SSF51735">
    <property type="entry name" value="NAD(P)-binding Rossmann-fold domains"/>
    <property type="match status" value="1"/>
</dbReference>
<dbReference type="PROSITE" id="PS00067">
    <property type="entry name" value="3HCDH"/>
    <property type="match status" value="1"/>
</dbReference>
<dbReference type="PROSITE" id="PS00166">
    <property type="entry name" value="ENOYL_COA_HYDRATASE"/>
    <property type="match status" value="1"/>
</dbReference>
<feature type="chain" id="PRO_1000186031" description="Fatty acid oxidation complex subunit alpha">
    <location>
        <begin position="1"/>
        <end position="726"/>
    </location>
</feature>
<feature type="region of interest" description="Enoyl-CoA hydratase/isomerase" evidence="1">
    <location>
        <begin position="1"/>
        <end position="189"/>
    </location>
</feature>
<feature type="region of interest" description="3-hydroxyacyl-CoA dehydrogenase" evidence="1">
    <location>
        <begin position="311"/>
        <end position="726"/>
    </location>
</feature>
<feature type="active site" description="For 3-hydroxyacyl-CoA dehydrogenase activity" evidence="1">
    <location>
        <position position="450"/>
    </location>
</feature>
<feature type="binding site" evidence="1">
    <location>
        <position position="296"/>
    </location>
    <ligand>
        <name>substrate</name>
    </ligand>
</feature>
<feature type="binding site" evidence="1">
    <location>
        <position position="324"/>
    </location>
    <ligand>
        <name>NAD(+)</name>
        <dbReference type="ChEBI" id="CHEBI:57540"/>
    </ligand>
</feature>
<feature type="binding site" evidence="1">
    <location>
        <position position="343"/>
    </location>
    <ligand>
        <name>NAD(+)</name>
        <dbReference type="ChEBI" id="CHEBI:57540"/>
    </ligand>
</feature>
<feature type="binding site" evidence="1">
    <location>
        <begin position="400"/>
        <end position="402"/>
    </location>
    <ligand>
        <name>NAD(+)</name>
        <dbReference type="ChEBI" id="CHEBI:57540"/>
    </ligand>
</feature>
<feature type="binding site" evidence="1">
    <location>
        <position position="407"/>
    </location>
    <ligand>
        <name>NAD(+)</name>
        <dbReference type="ChEBI" id="CHEBI:57540"/>
    </ligand>
</feature>
<feature type="binding site" evidence="1">
    <location>
        <position position="429"/>
    </location>
    <ligand>
        <name>NAD(+)</name>
        <dbReference type="ChEBI" id="CHEBI:57540"/>
    </ligand>
</feature>
<feature type="binding site" evidence="1">
    <location>
        <position position="453"/>
    </location>
    <ligand>
        <name>NAD(+)</name>
        <dbReference type="ChEBI" id="CHEBI:57540"/>
    </ligand>
</feature>
<feature type="binding site" evidence="1">
    <location>
        <position position="500"/>
    </location>
    <ligand>
        <name>substrate</name>
    </ligand>
</feature>
<feature type="binding site" evidence="1">
    <location>
        <position position="660"/>
    </location>
    <ligand>
        <name>substrate</name>
    </ligand>
</feature>
<feature type="site" description="Important for catalytic activity" evidence="1">
    <location>
        <position position="119"/>
    </location>
</feature>
<feature type="site" description="Important for catalytic activity" evidence="1">
    <location>
        <position position="139"/>
    </location>
</feature>
<sequence length="726" mass="78731">MIYQGENLSVDYIENGIAHLVFNAAGSVNKLNIATLRSLGEAIDVLYKQKDLQALLLSSGKSAFIVGADITEFLGLFDTPEEELSDWLHQANVIFSRLEDLPVPTLSAITGFALGGGCECVLATDFRLADDTASIGLPETQLGIMPGWGGSVRLPRLIGADPAMEVITTGKPKRAKDALKIGMVDGIVSRETLIDASVSMLKQAIDGQLNWQQRREQKKAPIQLSPLEAAMSFNVAKGMIMKMAGKHYPAPLTAVKSIEQSANMHRDDALAIENKHFVALTRTDVAKSLVGIFLNDQLVKSKAKQAVKNSEPVKNAAVLGAGIMGGGIAYQSASKGVPVLMKDIAQASLDLGMNEASKLLNKQLERGRLSGLKMAQVLSSITPSLNYGGIETKDVIVEAVVENPTIKAAVLAEVENEVNEHAILASNTSTIPISLLAKSLKRPENFCGMHFFNPVHRMPLVEVIRGEKTSQQTIDRVVAYASQMGKTPIVVNDCPGFFVNRVLFPYFAGFSLLLRDGGNYQQIDKVMEKEFGWPMGPAYLLDVVGIDTAHHAQAVMAQGFPERMAKNGRDVIDAMFEDDRYGQKNGIGFYAYALDKKGKPKKNIDEKTNAIIATITDSTQPYTSEQISARMMIPMINEVIRCLDEGIIASPAEADMALVYGLGFPPFKGGVFRYLDSIGLDTYLDMAKEFEQLSPVYQVPDSIKQKAAAGECYYPAPKSSVSSPSV</sequence>
<reference key="1">
    <citation type="journal article" date="2008" name="BMC Genomics">
        <title>The genome sequence of the fish pathogen Aliivibrio salmonicida strain LFI1238 shows extensive evidence of gene decay.</title>
        <authorList>
            <person name="Hjerde E."/>
            <person name="Lorentzen M.S."/>
            <person name="Holden M.T."/>
            <person name="Seeger K."/>
            <person name="Paulsen S."/>
            <person name="Bason N."/>
            <person name="Churcher C."/>
            <person name="Harris D."/>
            <person name="Norbertczak H."/>
            <person name="Quail M.A."/>
            <person name="Sanders S."/>
            <person name="Thurston S."/>
            <person name="Parkhill J."/>
            <person name="Willassen N.P."/>
            <person name="Thomson N.R."/>
        </authorList>
    </citation>
    <scope>NUCLEOTIDE SEQUENCE [LARGE SCALE GENOMIC DNA]</scope>
    <source>
        <strain>LFI1238</strain>
    </source>
</reference>
<protein>
    <recommendedName>
        <fullName evidence="1">Fatty acid oxidation complex subunit alpha</fullName>
    </recommendedName>
    <domain>
        <recommendedName>
            <fullName evidence="1">Enoyl-CoA hydratase/Delta(3)-cis-Delta(2)-trans-enoyl-CoA isomerase/3-hydroxybutyryl-CoA epimerase</fullName>
            <ecNumber evidence="1">4.2.1.17</ecNumber>
            <ecNumber evidence="1">5.1.2.3</ecNumber>
            <ecNumber evidence="1">5.3.3.8</ecNumber>
        </recommendedName>
    </domain>
    <domain>
        <recommendedName>
            <fullName evidence="1">3-hydroxyacyl-CoA dehydrogenase</fullName>
            <ecNumber evidence="1">1.1.1.35</ecNumber>
        </recommendedName>
    </domain>
</protein>
<proteinExistence type="inferred from homology"/>
<gene>
    <name evidence="1" type="primary">fadB</name>
    <name type="ordered locus">VSAL_I2974</name>
</gene>
<keyword id="KW-0276">Fatty acid metabolism</keyword>
<keyword id="KW-0413">Isomerase</keyword>
<keyword id="KW-0442">Lipid degradation</keyword>
<keyword id="KW-0443">Lipid metabolism</keyword>
<keyword id="KW-0456">Lyase</keyword>
<keyword id="KW-0511">Multifunctional enzyme</keyword>
<keyword id="KW-0520">NAD</keyword>
<keyword id="KW-0560">Oxidoreductase</keyword>
<organism>
    <name type="scientific">Aliivibrio salmonicida (strain LFI1238)</name>
    <name type="common">Vibrio salmonicida (strain LFI1238)</name>
    <dbReference type="NCBI Taxonomy" id="316275"/>
    <lineage>
        <taxon>Bacteria</taxon>
        <taxon>Pseudomonadati</taxon>
        <taxon>Pseudomonadota</taxon>
        <taxon>Gammaproteobacteria</taxon>
        <taxon>Vibrionales</taxon>
        <taxon>Vibrionaceae</taxon>
        <taxon>Aliivibrio</taxon>
    </lineage>
</organism>
<name>FADB_ALISL</name>